<gene>
    <name type="ordered locus">PD_0811</name>
</gene>
<comment type="similarity">
    <text evidence="2">Belongs to the transcriptional regulatory Fis family.</text>
</comment>
<feature type="chain" id="PRO_0000203912" description="Putative Fis-like DNA-binding protein">
    <location>
        <begin position="1"/>
        <end position="90"/>
    </location>
</feature>
<feature type="DNA-binding region" description="H-T-H motif" evidence="1">
    <location>
        <begin position="66"/>
        <end position="85"/>
    </location>
</feature>
<keyword id="KW-0238">DNA-binding</keyword>
<keyword id="KW-1185">Reference proteome</keyword>
<evidence type="ECO:0000250" key="1"/>
<evidence type="ECO:0000305" key="2"/>
<proteinExistence type="inferred from homology"/>
<protein>
    <recommendedName>
        <fullName>Putative Fis-like DNA-binding protein</fullName>
    </recommendedName>
</protein>
<name>FISL_XYLFT</name>
<organism>
    <name type="scientific">Xylella fastidiosa (strain Temecula1 / ATCC 700964)</name>
    <dbReference type="NCBI Taxonomy" id="183190"/>
    <lineage>
        <taxon>Bacteria</taxon>
        <taxon>Pseudomonadati</taxon>
        <taxon>Pseudomonadota</taxon>
        <taxon>Gammaproteobacteria</taxon>
        <taxon>Lysobacterales</taxon>
        <taxon>Lysobacteraceae</taxon>
        <taxon>Xylella</taxon>
    </lineage>
</organism>
<dbReference type="EMBL" id="AE009442">
    <property type="protein sequence ID" value="AAO28679.1"/>
    <property type="molecule type" value="Genomic_DNA"/>
</dbReference>
<dbReference type="SMR" id="Q87D75"/>
<dbReference type="KEGG" id="xft:PD_0811"/>
<dbReference type="HOGENOM" id="CLU_158040_3_0_6"/>
<dbReference type="Proteomes" id="UP000002516">
    <property type="component" value="Chromosome"/>
</dbReference>
<dbReference type="GO" id="GO:0043565">
    <property type="term" value="F:sequence-specific DNA binding"/>
    <property type="evidence" value="ECO:0007669"/>
    <property type="project" value="InterPro"/>
</dbReference>
<dbReference type="GO" id="GO:0006355">
    <property type="term" value="P:regulation of DNA-templated transcription"/>
    <property type="evidence" value="ECO:0007669"/>
    <property type="project" value="InterPro"/>
</dbReference>
<dbReference type="Gene3D" id="1.10.10.60">
    <property type="entry name" value="Homeodomain-like"/>
    <property type="match status" value="1"/>
</dbReference>
<dbReference type="InterPro" id="IPR005412">
    <property type="entry name" value="Fis_DNA-bd"/>
</dbReference>
<dbReference type="InterPro" id="IPR009057">
    <property type="entry name" value="Homeodomain-like_sf"/>
</dbReference>
<dbReference type="InterPro" id="IPR002197">
    <property type="entry name" value="HTH_Fis"/>
</dbReference>
<dbReference type="InterPro" id="IPR050207">
    <property type="entry name" value="Trans_regulatory_Fis"/>
</dbReference>
<dbReference type="NCBIfam" id="NF001659">
    <property type="entry name" value="PRK00430.1"/>
    <property type="match status" value="1"/>
</dbReference>
<dbReference type="PANTHER" id="PTHR47918">
    <property type="entry name" value="DNA-BINDING PROTEIN FIS"/>
    <property type="match status" value="1"/>
</dbReference>
<dbReference type="PANTHER" id="PTHR47918:SF1">
    <property type="entry name" value="DNA-BINDING PROTEIN FIS"/>
    <property type="match status" value="1"/>
</dbReference>
<dbReference type="Pfam" id="PF02954">
    <property type="entry name" value="HTH_8"/>
    <property type="match status" value="1"/>
</dbReference>
<dbReference type="PIRSF" id="PIRSF002097">
    <property type="entry name" value="DNA-binding_Fis"/>
    <property type="match status" value="1"/>
</dbReference>
<dbReference type="PRINTS" id="PR01591">
    <property type="entry name" value="DNABINDNGFIS"/>
</dbReference>
<dbReference type="PRINTS" id="PR01590">
    <property type="entry name" value="HTHFIS"/>
</dbReference>
<dbReference type="SUPFAM" id="SSF46689">
    <property type="entry name" value="Homeodomain-like"/>
    <property type="match status" value="1"/>
</dbReference>
<accession>Q87D75</accession>
<sequence length="90" mass="10207">MNVVPSRPEVSRGSPKSPLREHVAQVVRRYLRDLDGCDANDLYNMVLREMEIPLLVEVLNHCEGNQSRAAALLGIHRATLRKKLKEYGLV</sequence>
<reference key="1">
    <citation type="journal article" date="2003" name="J. Bacteriol.">
        <title>Comparative analyses of the complete genome sequences of Pierce's disease and citrus variegated chlorosis strains of Xylella fastidiosa.</title>
        <authorList>
            <person name="Van Sluys M.A."/>
            <person name="de Oliveira M.C."/>
            <person name="Monteiro-Vitorello C.B."/>
            <person name="Miyaki C.Y."/>
            <person name="Furlan L.R."/>
            <person name="Camargo L.E.A."/>
            <person name="da Silva A.C.R."/>
            <person name="Moon D.H."/>
            <person name="Takita M.A."/>
            <person name="Lemos E.G.M."/>
            <person name="Machado M.A."/>
            <person name="Ferro M.I.T."/>
            <person name="da Silva F.R."/>
            <person name="Goldman M.H.S."/>
            <person name="Goldman G.H."/>
            <person name="Lemos M.V.F."/>
            <person name="El-Dorry H."/>
            <person name="Tsai S.M."/>
            <person name="Carrer H."/>
            <person name="Carraro D.M."/>
            <person name="de Oliveira R.C."/>
            <person name="Nunes L.R."/>
            <person name="Siqueira W.J."/>
            <person name="Coutinho L.L."/>
            <person name="Kimura E.T."/>
            <person name="Ferro E.S."/>
            <person name="Harakava R."/>
            <person name="Kuramae E.E."/>
            <person name="Marino C.L."/>
            <person name="Giglioti E."/>
            <person name="Abreu I.L."/>
            <person name="Alves L.M.C."/>
            <person name="do Amaral A.M."/>
            <person name="Baia G.S."/>
            <person name="Blanco S.R."/>
            <person name="Brito M.S."/>
            <person name="Cannavan F.S."/>
            <person name="Celestino A.V."/>
            <person name="da Cunha A.F."/>
            <person name="Fenille R.C."/>
            <person name="Ferro J.A."/>
            <person name="Formighieri E.F."/>
            <person name="Kishi L.T."/>
            <person name="Leoni S.G."/>
            <person name="Oliveira A.R."/>
            <person name="Rosa V.E. Jr."/>
            <person name="Sassaki F.T."/>
            <person name="Sena J.A.D."/>
            <person name="de Souza A.A."/>
            <person name="Truffi D."/>
            <person name="Tsukumo F."/>
            <person name="Yanai G.M."/>
            <person name="Zaros L.G."/>
            <person name="Civerolo E.L."/>
            <person name="Simpson A.J.G."/>
            <person name="Almeida N.F. Jr."/>
            <person name="Setubal J.C."/>
            <person name="Kitajima J.P."/>
        </authorList>
    </citation>
    <scope>NUCLEOTIDE SEQUENCE [LARGE SCALE GENOMIC DNA]</scope>
    <source>
        <strain>Temecula1 / ATCC 700964</strain>
    </source>
</reference>